<organism>
    <name type="scientific">Arabidopsis thaliana</name>
    <name type="common">Mouse-ear cress</name>
    <dbReference type="NCBI Taxonomy" id="3702"/>
    <lineage>
        <taxon>Eukaryota</taxon>
        <taxon>Viridiplantae</taxon>
        <taxon>Streptophyta</taxon>
        <taxon>Embryophyta</taxon>
        <taxon>Tracheophyta</taxon>
        <taxon>Spermatophyta</taxon>
        <taxon>Magnoliopsida</taxon>
        <taxon>eudicotyledons</taxon>
        <taxon>Gunneridae</taxon>
        <taxon>Pentapetalae</taxon>
        <taxon>rosids</taxon>
        <taxon>malvids</taxon>
        <taxon>Brassicales</taxon>
        <taxon>Brassicaceae</taxon>
        <taxon>Camelineae</taxon>
        <taxon>Arabidopsis</taxon>
    </lineage>
</organism>
<keyword id="KW-0963">Cytoplasm</keyword>
<keyword id="KW-0539">Nucleus</keyword>
<keyword id="KW-0597">Phosphoprotein</keyword>
<keyword id="KW-1185">Reference proteome</keyword>
<keyword id="KW-0677">Repeat</keyword>
<keyword id="KW-0810">Translation regulation</keyword>
<gene>
    <name evidence="6" type="primary">MRF1</name>
    <name evidence="5" type="synonym">MAT6</name>
    <name evidence="8" type="ordered locus">At5g63190</name>
    <name evidence="9" type="ORF">MDC12.16</name>
</gene>
<proteinExistence type="evidence at protein level"/>
<feature type="chain" id="PRO_0000447574" description="MA3 DOMAIN-CONTAINING TRANSLATION REGULATORY FACTOR 1">
    <location>
        <begin position="1"/>
        <end position="702"/>
    </location>
</feature>
<feature type="domain" description="MI 1" evidence="1">
    <location>
        <begin position="122"/>
        <end position="243"/>
    </location>
</feature>
<feature type="domain" description="MI 2" evidence="1">
    <location>
        <begin position="286"/>
        <end position="407"/>
    </location>
</feature>
<feature type="domain" description="MI 3" evidence="1">
    <location>
        <begin position="420"/>
        <end position="541"/>
    </location>
</feature>
<feature type="domain" description="MI 4" evidence="1">
    <location>
        <begin position="583"/>
        <end position="702"/>
    </location>
</feature>
<feature type="region of interest" description="Disordered" evidence="3">
    <location>
        <begin position="39"/>
        <end position="66"/>
    </location>
</feature>
<feature type="short sequence motif" description="Nuclear localization signal 1" evidence="2">
    <location>
        <begin position="273"/>
        <end position="280"/>
    </location>
</feature>
<feature type="short sequence motif" description="Nuclear localization signal 2" evidence="2">
    <location>
        <begin position="458"/>
        <end position="465"/>
    </location>
</feature>
<feature type="compositionally biased region" description="Basic residues" evidence="3">
    <location>
        <begin position="57"/>
        <end position="66"/>
    </location>
</feature>
<name>MRF1_ARATH</name>
<protein>
    <recommendedName>
        <fullName evidence="6">MA3 DOMAIN-CONTAINING TRANSLATION REGULATORY FACTOR 1</fullName>
    </recommendedName>
    <alternativeName>
        <fullName evidence="5">MA3 domain-containing protein 6</fullName>
    </alternativeName>
</protein>
<comment type="function">
    <text evidence="4">Involved in target of rapamycin (TOR)-regulated translation control, especially under energy-deficient conditions.</text>
</comment>
<comment type="subunit">
    <text evidence="4">Binds to EIF4A1, S6K1 and S6K2 (PubMed:29084871). The association with ribosomes is modulated by cellular energy status and TOR activity (PubMed:29084871).</text>
</comment>
<comment type="subcellular location">
    <subcellularLocation>
        <location evidence="2">Nucleus</location>
    </subcellularLocation>
    <subcellularLocation>
        <location evidence="4">Cytoplasm</location>
        <location evidence="4">Cytosol</location>
    </subcellularLocation>
</comment>
<comment type="tissue specificity">
    <text evidence="4">Mostly expressed in vegetative tissues, such as leaves, roots and stems, and, to a lower extent, in reproductive tissues, such as flower buds and flowers.</text>
</comment>
<comment type="induction">
    <text evidence="4">Induced by dark and starvation but repressed by glucose feeding subsequent to starvation in a TOR-dependent manner.</text>
</comment>
<comment type="PTM">
    <text evidence="4">Phosphorylation by S6 kinases (e.g. S6K1 and S6K2) is modulated by cellular energy status and TOR activity.</text>
</comment>
<comment type="disruption phenotype">
    <text evidence="4">Increased susceptibility to dark and starvation, and to treatment with the TOR inhibitor (PubMed:29084871). Decreased translation activity associated with altered ribosome patterns, especially in the dark and starvation conditions, in which mRNAs distribution is altered and rRNA abnormally degraded (PubMed:29084871). Slightly early flowering time under long-day conditions (PubMed:29084871).</text>
</comment>
<comment type="similarity">
    <text evidence="7">Belongs to the PDCD4 family.</text>
</comment>
<comment type="sequence caution" evidence="7">
    <conflict type="erroneous gene model prediction">
        <sequence resource="EMBL-CDS" id="BAB10561"/>
    </conflict>
</comment>
<sequence>MASGEGILTDGQWKKLEIATHNSGSLSSSPKSHTLFADLNIKSPTGGKGPVAGIPNRHVRRTHSGKHIRVKKEGAGGKGTWGKLLDTDDGDSCIDKNDPNYDSGEDAYDGLVDSPVSDPLNDYKKSVVSIIDEYFSTGDVKVAASDLRELGSSEYHPYFTKRLVSMAMDRHDKEKEMASVLLSALYADVILPDQIRDGFIRLLRSVDDLAVDILDAVNVLALFIARAIVDEILPPVFLVRSKKILPESCKGFQVIVTAEKSYLSAPHHAELVEKKWGGSTHTTVEETKKKISEILKEYVENGDTYEACRCIRELGVSFFHHEVVKRALVLAMDSPTAESLVLKLLKETAEEGLISSSQMVKGFFRVAESLDDLALDIPSAKKLFDSIVPKAISGGWLDDSFKITSDQDGEKSSQDGKLRQYKKDTVNIIQEYFLSDDIPELIRSLQDLGAPEYNPVFLKRLITLALDRKNREKEMASVLLSALHMELFSTEDFINGFIMLLESAEDTALDIMDASNELALFLARAVIDDVLAPLNLEDISTKLPPKSTGTETVRSARSLISARHAGERLLRSWGGGTGWIVEDAKDKISKLLEEYETGGVTSEACQCIRDLGMPFFNHEVVKKALVMAMEKQNDRLLNLLEECFGEGLITTNQMTKGFGRVNDSLDDLSLDIPNAKEKFELYASHAMDNGWILPEFGISATQ</sequence>
<accession>Q94BR1</accession>
<accession>Q8LDN5</accession>
<accession>Q9FMK4</accession>
<dbReference type="EMBL" id="AB008265">
    <property type="protein sequence ID" value="BAB10561.1"/>
    <property type="status" value="ALT_SEQ"/>
    <property type="molecule type" value="Genomic_DNA"/>
</dbReference>
<dbReference type="EMBL" id="CP002688">
    <property type="protein sequence ID" value="AED97716.1"/>
    <property type="molecule type" value="Genomic_DNA"/>
</dbReference>
<dbReference type="EMBL" id="CP002688">
    <property type="protein sequence ID" value="AED97717.1"/>
    <property type="molecule type" value="Genomic_DNA"/>
</dbReference>
<dbReference type="EMBL" id="AY039947">
    <property type="protein sequence ID" value="AAK64051.1"/>
    <property type="molecule type" value="mRNA"/>
</dbReference>
<dbReference type="EMBL" id="AY142667">
    <property type="protein sequence ID" value="AAN13205.1"/>
    <property type="molecule type" value="mRNA"/>
</dbReference>
<dbReference type="EMBL" id="AY085894">
    <property type="protein sequence ID" value="AAM63106.1"/>
    <property type="molecule type" value="mRNA"/>
</dbReference>
<dbReference type="RefSeq" id="NP_568968.1">
    <property type="nucleotide sequence ID" value="NM_125714.3"/>
</dbReference>
<dbReference type="RefSeq" id="NP_851255.1">
    <property type="nucleotide sequence ID" value="NM_180924.3"/>
</dbReference>
<dbReference type="SMR" id="Q94BR1"/>
<dbReference type="FunCoup" id="Q94BR1">
    <property type="interactions" value="2240"/>
</dbReference>
<dbReference type="IntAct" id="Q94BR1">
    <property type="interactions" value="2"/>
</dbReference>
<dbReference type="STRING" id="3702.Q94BR1"/>
<dbReference type="iPTMnet" id="Q94BR1"/>
<dbReference type="PaxDb" id="3702-AT5G63190.2"/>
<dbReference type="ProteomicsDB" id="189753"/>
<dbReference type="EnsemblPlants" id="AT5G63190.1">
    <property type="protein sequence ID" value="AT5G63190.1"/>
    <property type="gene ID" value="AT5G63190"/>
</dbReference>
<dbReference type="EnsemblPlants" id="AT5G63190.2">
    <property type="protein sequence ID" value="AT5G63190.2"/>
    <property type="gene ID" value="AT5G63190"/>
</dbReference>
<dbReference type="GeneID" id="836440"/>
<dbReference type="Gramene" id="AT5G63190.1">
    <property type="protein sequence ID" value="AT5G63190.1"/>
    <property type="gene ID" value="AT5G63190"/>
</dbReference>
<dbReference type="Gramene" id="AT5G63190.2">
    <property type="protein sequence ID" value="AT5G63190.2"/>
    <property type="gene ID" value="AT5G63190"/>
</dbReference>
<dbReference type="KEGG" id="ath:AT5G63190"/>
<dbReference type="Araport" id="AT5G63190"/>
<dbReference type="TAIR" id="AT5G63190">
    <property type="gene designation" value="MRF1"/>
</dbReference>
<dbReference type="eggNOG" id="KOG0403">
    <property type="taxonomic scope" value="Eukaryota"/>
</dbReference>
<dbReference type="HOGENOM" id="CLU_013764_0_0_1"/>
<dbReference type="InParanoid" id="Q94BR1"/>
<dbReference type="OMA" id="MNILSFE"/>
<dbReference type="PhylomeDB" id="Q94BR1"/>
<dbReference type="PRO" id="PR:Q94BR1"/>
<dbReference type="Proteomes" id="UP000006548">
    <property type="component" value="Chromosome 5"/>
</dbReference>
<dbReference type="ExpressionAtlas" id="Q94BR1">
    <property type="expression patterns" value="baseline and differential"/>
</dbReference>
<dbReference type="GO" id="GO:0005829">
    <property type="term" value="C:cytosol"/>
    <property type="evidence" value="ECO:0000314"/>
    <property type="project" value="TAIR"/>
</dbReference>
<dbReference type="GO" id="GO:0005634">
    <property type="term" value="C:nucleus"/>
    <property type="evidence" value="ECO:0007669"/>
    <property type="project" value="UniProtKB-SubCell"/>
</dbReference>
<dbReference type="GO" id="GO:0003729">
    <property type="term" value="F:mRNA binding"/>
    <property type="evidence" value="ECO:0000314"/>
    <property type="project" value="TAIR"/>
</dbReference>
<dbReference type="GO" id="GO:0043022">
    <property type="term" value="F:ribosome binding"/>
    <property type="evidence" value="ECO:0000314"/>
    <property type="project" value="UniProtKB"/>
</dbReference>
<dbReference type="GO" id="GO:0045892">
    <property type="term" value="P:negative regulation of DNA-templated transcription"/>
    <property type="evidence" value="ECO:0007669"/>
    <property type="project" value="InterPro"/>
</dbReference>
<dbReference type="GO" id="GO:0006417">
    <property type="term" value="P:regulation of translation"/>
    <property type="evidence" value="ECO:0007669"/>
    <property type="project" value="UniProtKB-KW"/>
</dbReference>
<dbReference type="GO" id="GO:0009646">
    <property type="term" value="P:response to absence of light"/>
    <property type="evidence" value="ECO:0000270"/>
    <property type="project" value="TAIR"/>
</dbReference>
<dbReference type="GO" id="GO:0090549">
    <property type="term" value="P:response to carbon starvation"/>
    <property type="evidence" value="ECO:0000270"/>
    <property type="project" value="TAIR"/>
</dbReference>
<dbReference type="FunFam" id="1.25.40.180:FF:000008">
    <property type="entry name" value="Programmed cell death protein 4"/>
    <property type="match status" value="1"/>
</dbReference>
<dbReference type="FunFam" id="1.25.40.180:FF:000009">
    <property type="entry name" value="programmed cell death protein 4"/>
    <property type="match status" value="2"/>
</dbReference>
<dbReference type="Gene3D" id="1.25.40.180">
    <property type="match status" value="4"/>
</dbReference>
<dbReference type="InterPro" id="IPR016024">
    <property type="entry name" value="ARM-type_fold"/>
</dbReference>
<dbReference type="InterPro" id="IPR003891">
    <property type="entry name" value="Initiation_fac_eIF4g_MI"/>
</dbReference>
<dbReference type="InterPro" id="IPR039778">
    <property type="entry name" value="PDCD4"/>
</dbReference>
<dbReference type="PANTHER" id="PTHR12626:SF7">
    <property type="entry name" value="MA3 DOMAIN-CONTAINING TRANSLATION REGULATORY FACTOR 1"/>
    <property type="match status" value="1"/>
</dbReference>
<dbReference type="PANTHER" id="PTHR12626">
    <property type="entry name" value="PROGRAMMED CELL DEATH 4"/>
    <property type="match status" value="1"/>
</dbReference>
<dbReference type="Pfam" id="PF02847">
    <property type="entry name" value="MA3"/>
    <property type="match status" value="4"/>
</dbReference>
<dbReference type="SMART" id="SM00544">
    <property type="entry name" value="MA3"/>
    <property type="match status" value="4"/>
</dbReference>
<dbReference type="SUPFAM" id="SSF48371">
    <property type="entry name" value="ARM repeat"/>
    <property type="match status" value="4"/>
</dbReference>
<dbReference type="PROSITE" id="PS51366">
    <property type="entry name" value="MI"/>
    <property type="match status" value="4"/>
</dbReference>
<reference key="1">
    <citation type="journal article" date="1997" name="DNA Res.">
        <title>Structural analysis of Arabidopsis thaliana chromosome 5. III. Sequence features of the regions of 1,191,918 bp covered by seventeen physically assigned P1 clones.</title>
        <authorList>
            <person name="Nakamura Y."/>
            <person name="Sato S."/>
            <person name="Kaneko T."/>
            <person name="Kotani H."/>
            <person name="Asamizu E."/>
            <person name="Miyajima N."/>
            <person name="Tabata S."/>
        </authorList>
    </citation>
    <scope>NUCLEOTIDE SEQUENCE [LARGE SCALE GENOMIC DNA]</scope>
    <source>
        <strain>cv. Columbia</strain>
    </source>
</reference>
<reference key="2">
    <citation type="journal article" date="2017" name="Plant J.">
        <title>Araport11: a complete reannotation of the Arabidopsis thaliana reference genome.</title>
        <authorList>
            <person name="Cheng C.Y."/>
            <person name="Krishnakumar V."/>
            <person name="Chan A.P."/>
            <person name="Thibaud-Nissen F."/>
            <person name="Schobel S."/>
            <person name="Town C.D."/>
        </authorList>
    </citation>
    <scope>GENOME REANNOTATION</scope>
    <source>
        <strain>cv. Columbia</strain>
    </source>
</reference>
<reference key="3">
    <citation type="journal article" date="2003" name="Science">
        <title>Empirical analysis of transcriptional activity in the Arabidopsis genome.</title>
        <authorList>
            <person name="Yamada K."/>
            <person name="Lim J."/>
            <person name="Dale J.M."/>
            <person name="Chen H."/>
            <person name="Shinn P."/>
            <person name="Palm C.J."/>
            <person name="Southwick A.M."/>
            <person name="Wu H.C."/>
            <person name="Kim C.J."/>
            <person name="Nguyen M."/>
            <person name="Pham P.K."/>
            <person name="Cheuk R.F."/>
            <person name="Karlin-Newmann G."/>
            <person name="Liu S.X."/>
            <person name="Lam B."/>
            <person name="Sakano H."/>
            <person name="Wu T."/>
            <person name="Yu G."/>
            <person name="Miranda M."/>
            <person name="Quach H.L."/>
            <person name="Tripp M."/>
            <person name="Chang C.H."/>
            <person name="Lee J.M."/>
            <person name="Toriumi M.J."/>
            <person name="Chan M.M."/>
            <person name="Tang C.C."/>
            <person name="Onodera C.S."/>
            <person name="Deng J.M."/>
            <person name="Akiyama K."/>
            <person name="Ansari Y."/>
            <person name="Arakawa T."/>
            <person name="Banh J."/>
            <person name="Banno F."/>
            <person name="Bowser L."/>
            <person name="Brooks S.Y."/>
            <person name="Carninci P."/>
            <person name="Chao Q."/>
            <person name="Choy N."/>
            <person name="Enju A."/>
            <person name="Goldsmith A.D."/>
            <person name="Gurjal M."/>
            <person name="Hansen N.F."/>
            <person name="Hayashizaki Y."/>
            <person name="Johnson-Hopson C."/>
            <person name="Hsuan V.W."/>
            <person name="Iida K."/>
            <person name="Karnes M."/>
            <person name="Khan S."/>
            <person name="Koesema E."/>
            <person name="Ishida J."/>
            <person name="Jiang P.X."/>
            <person name="Jones T."/>
            <person name="Kawai J."/>
            <person name="Kamiya A."/>
            <person name="Meyers C."/>
            <person name="Nakajima M."/>
            <person name="Narusaka M."/>
            <person name="Seki M."/>
            <person name="Sakurai T."/>
            <person name="Satou M."/>
            <person name="Tamse R."/>
            <person name="Vaysberg M."/>
            <person name="Wallender E.K."/>
            <person name="Wong C."/>
            <person name="Yamamura Y."/>
            <person name="Yuan S."/>
            <person name="Shinozaki K."/>
            <person name="Davis R.W."/>
            <person name="Theologis A."/>
            <person name="Ecker J.R."/>
        </authorList>
    </citation>
    <scope>NUCLEOTIDE SEQUENCE [LARGE SCALE MRNA]</scope>
    <source>
        <strain>cv. Columbia</strain>
    </source>
</reference>
<reference key="4">
    <citation type="submission" date="2002-03" db="EMBL/GenBank/DDBJ databases">
        <title>Full-length cDNA from Arabidopsis thaliana.</title>
        <authorList>
            <person name="Brover V.V."/>
            <person name="Troukhan M.E."/>
            <person name="Alexandrov N.A."/>
            <person name="Lu Y.-P."/>
            <person name="Flavell R.B."/>
            <person name="Feldmann K.A."/>
        </authorList>
    </citation>
    <scope>NUCLEOTIDE SEQUENCE [LARGE SCALE MRNA]</scope>
</reference>
<reference evidence="10" key="5">
    <citation type="journal article" date="2012" name="Mol. Cell. Proteomics">
        <title>Comparative large-scale characterisation of plant vs. mammal proteins reveals similar and idiosyncratic N-alpha acetylation features.</title>
        <authorList>
            <person name="Bienvenut W.V."/>
            <person name="Sumpton D."/>
            <person name="Martinez A."/>
            <person name="Lilla S."/>
            <person name="Espagne C."/>
            <person name="Meinnel T."/>
            <person name="Giglione C."/>
        </authorList>
    </citation>
    <scope>IDENTIFICATION BY MASS SPECTROMETRY [LARGE SCALE ANALYSIS]</scope>
</reference>
<reference key="6">
    <citation type="journal article" date="2013" name="BMC Evol. Biol.">
        <title>The unique evolution of the programmed cell death 4 protein in plants.</title>
        <authorList>
            <person name="Cheng S."/>
            <person name="Liu R."/>
            <person name="Gallie D.R."/>
        </authorList>
    </citation>
    <scope>GENE FAMILY</scope>
</reference>
<reference key="7">
    <citation type="journal article" date="2017" name="Plant Cell">
        <title>MRF family genes are involved in translation control, especially under energy-deficient conditions, and their expression and functions are modulated by the TOR signaling pathway.</title>
        <authorList>
            <person name="Lee D.-H."/>
            <person name="Park S.J."/>
            <person name="Ahn C.S."/>
            <person name="Pai H.-S."/>
        </authorList>
    </citation>
    <scope>FUNCTION</scope>
    <scope>DISRUPTION PHENOTYPE</scope>
    <scope>INDUCTION BY DARK AND STARVATION</scope>
    <scope>PHOSPHORYLATION</scope>
    <scope>TISSUE SPECIFICITY</scope>
    <scope>INTERACTION WITH S6K1; S6K2; EIF4A1 AND RIBOSOMES</scope>
    <scope>SUBCELLULAR LOCATION</scope>
    <scope>GENE FAMILY</scope>
    <scope>NOMENCLATURE</scope>
    <source>
        <strain>cv. Columbia</strain>
    </source>
</reference>
<evidence type="ECO:0000255" key="1">
    <source>
        <dbReference type="PROSITE-ProRule" id="PRU00698"/>
    </source>
</evidence>
<evidence type="ECO:0000255" key="2">
    <source>
        <dbReference type="PROSITE-ProRule" id="PRU00768"/>
    </source>
</evidence>
<evidence type="ECO:0000256" key="3">
    <source>
        <dbReference type="SAM" id="MobiDB-lite"/>
    </source>
</evidence>
<evidence type="ECO:0000269" key="4">
    <source>
    </source>
</evidence>
<evidence type="ECO:0000303" key="5">
    <source>
    </source>
</evidence>
<evidence type="ECO:0000303" key="6">
    <source>
    </source>
</evidence>
<evidence type="ECO:0000305" key="7"/>
<evidence type="ECO:0000312" key="8">
    <source>
        <dbReference type="Araport" id="AT5G63190"/>
    </source>
</evidence>
<evidence type="ECO:0000312" key="9">
    <source>
        <dbReference type="EMBL" id="BAB10561.1"/>
    </source>
</evidence>
<evidence type="ECO:0007744" key="10">
    <source>
    </source>
</evidence>